<feature type="chain" id="PRO_0000390597" description="Prokaryotic ubiquitin-like protein Pup">
    <location>
        <begin position="1"/>
        <end position="64"/>
    </location>
</feature>
<feature type="region of interest" description="Disordered" evidence="2">
    <location>
        <begin position="1"/>
        <end position="37"/>
    </location>
</feature>
<feature type="region of interest" description="ARC ATPase binding" evidence="1">
    <location>
        <begin position="21"/>
        <end position="58"/>
    </location>
</feature>
<feature type="coiled-coil region" evidence="1">
    <location>
        <begin position="24"/>
        <end position="52"/>
    </location>
</feature>
<feature type="modified residue" description="Deamidated glutamine" evidence="1">
    <location>
        <position position="64"/>
    </location>
</feature>
<feature type="cross-link" description="Isoglutamyl lysine isopeptide (Gln-Lys) (interchain with K-? in acceptor proteins)" evidence="1">
    <location>
        <position position="64"/>
    </location>
</feature>
<dbReference type="EMBL" id="CP000518">
    <property type="protein sequence ID" value="ABL92386.1"/>
    <property type="molecule type" value="Genomic_DNA"/>
</dbReference>
<dbReference type="SMR" id="A1UHS8"/>
<dbReference type="STRING" id="189918.Mkms_3192"/>
<dbReference type="KEGG" id="mkm:Mkms_3192"/>
<dbReference type="HOGENOM" id="CLU_183816_1_0_11"/>
<dbReference type="UniPathway" id="UPA00997"/>
<dbReference type="GO" id="GO:0070628">
    <property type="term" value="F:proteasome binding"/>
    <property type="evidence" value="ECO:0007669"/>
    <property type="project" value="UniProtKB-UniRule"/>
</dbReference>
<dbReference type="GO" id="GO:0031386">
    <property type="term" value="F:protein tag activity"/>
    <property type="evidence" value="ECO:0007669"/>
    <property type="project" value="UniProtKB-UniRule"/>
</dbReference>
<dbReference type="GO" id="GO:0019941">
    <property type="term" value="P:modification-dependent protein catabolic process"/>
    <property type="evidence" value="ECO:0007669"/>
    <property type="project" value="UniProtKB-UniRule"/>
</dbReference>
<dbReference type="GO" id="GO:0010498">
    <property type="term" value="P:proteasomal protein catabolic process"/>
    <property type="evidence" value="ECO:0007669"/>
    <property type="project" value="UniProtKB-UniRule"/>
</dbReference>
<dbReference type="GO" id="GO:0070490">
    <property type="term" value="P:protein pupylation"/>
    <property type="evidence" value="ECO:0007669"/>
    <property type="project" value="UniProtKB-UniRule"/>
</dbReference>
<dbReference type="HAMAP" id="MF_02106">
    <property type="entry name" value="Pup"/>
    <property type="match status" value="1"/>
</dbReference>
<dbReference type="InterPro" id="IPR008515">
    <property type="entry name" value="Ubiquitin-like_Pup"/>
</dbReference>
<dbReference type="NCBIfam" id="TIGR03687">
    <property type="entry name" value="pupylate_cterm"/>
    <property type="match status" value="1"/>
</dbReference>
<dbReference type="Pfam" id="PF05639">
    <property type="entry name" value="Pup"/>
    <property type="match status" value="1"/>
</dbReference>
<accession>A1UHS8</accession>
<evidence type="ECO:0000255" key="1">
    <source>
        <dbReference type="HAMAP-Rule" id="MF_02106"/>
    </source>
</evidence>
<evidence type="ECO:0000256" key="2">
    <source>
        <dbReference type="SAM" id="MobiDB-lite"/>
    </source>
</evidence>
<keyword id="KW-0175">Coiled coil</keyword>
<keyword id="KW-1017">Isopeptide bond</keyword>
<keyword id="KW-0833">Ubl conjugation pathway</keyword>
<protein>
    <recommendedName>
        <fullName evidence="1">Prokaryotic ubiquitin-like protein Pup</fullName>
    </recommendedName>
    <alternativeName>
        <fullName evidence="1">Bacterial ubiquitin-like modifier</fullName>
    </alternativeName>
</protein>
<sequence>MAQEQTKRGGGGGEDDDLSGGAGAGQERREKLAEETDDLLDEIDDVLEENAEDFVRAYVQKGGQ</sequence>
<gene>
    <name evidence="1" type="primary">pup</name>
    <name type="ordered locus">Mkms_3192</name>
</gene>
<comment type="function">
    <text evidence="1">Protein modifier that is covalently attached to lysine residues of substrate proteins, thereby targeting them for proteasomal degradation. The tagging system is termed pupylation.</text>
</comment>
<comment type="pathway">
    <text evidence="1">Protein degradation; proteasomal Pup-dependent pathway.</text>
</comment>
<comment type="subunit">
    <text evidence="1">Strongly interacts with the proteasome-associated ATPase ARC through a hydrophobic interface; the interacting region of Pup lies in its C-terminal half. There is one Pup binding site per ARC hexamer ring.</text>
</comment>
<comment type="domain">
    <text evidence="1">The N-terminal unstructured half of Pup provides a signal required to initiate unfolding and degradation by the proteasome but is not needed for pupylation, while the C-terminal helical half of Pup interacts with ARC to target proteins to the proteasome.</text>
</comment>
<comment type="PTM">
    <text evidence="1">Is modified by deamidation of its C-terminal glutamine to glutamate by the deamidase Dop, a prerequisite to the subsequent pupylation process.</text>
</comment>
<comment type="similarity">
    <text evidence="1">Belongs to the prokaryotic ubiquitin-like protein family.</text>
</comment>
<reference key="1">
    <citation type="submission" date="2006-12" db="EMBL/GenBank/DDBJ databases">
        <title>Complete sequence of chromosome of Mycobacterium sp. KMS.</title>
        <authorList>
            <consortium name="US DOE Joint Genome Institute"/>
            <person name="Copeland A."/>
            <person name="Lucas S."/>
            <person name="Lapidus A."/>
            <person name="Barry K."/>
            <person name="Detter J.C."/>
            <person name="Glavina del Rio T."/>
            <person name="Hammon N."/>
            <person name="Israni S."/>
            <person name="Dalin E."/>
            <person name="Tice H."/>
            <person name="Pitluck S."/>
            <person name="Kiss H."/>
            <person name="Brettin T."/>
            <person name="Bruce D."/>
            <person name="Han C."/>
            <person name="Tapia R."/>
            <person name="Gilna P."/>
            <person name="Schmutz J."/>
            <person name="Larimer F."/>
            <person name="Land M."/>
            <person name="Hauser L."/>
            <person name="Kyrpides N."/>
            <person name="Mikhailova N."/>
            <person name="Miller C.D."/>
            <person name="Richardson P."/>
        </authorList>
    </citation>
    <scope>NUCLEOTIDE SEQUENCE [LARGE SCALE GENOMIC DNA]</scope>
    <source>
        <strain>KMS</strain>
    </source>
</reference>
<proteinExistence type="inferred from homology"/>
<name>PUP_MYCSK</name>
<organism>
    <name type="scientific">Mycobacterium sp. (strain KMS)</name>
    <dbReference type="NCBI Taxonomy" id="189918"/>
    <lineage>
        <taxon>Bacteria</taxon>
        <taxon>Bacillati</taxon>
        <taxon>Actinomycetota</taxon>
        <taxon>Actinomycetes</taxon>
        <taxon>Mycobacteriales</taxon>
        <taxon>Mycobacteriaceae</taxon>
        <taxon>Mycobacterium</taxon>
    </lineage>
</organism>